<comment type="function">
    <text evidence="1">Bifunctional enzyme that catalyzes the formation of 4-diphosphocytidyl-2-C-methyl-D-erythritol from CTP and 2-C-methyl-D-erythritol 4-phosphate (MEP) (IspD), and catalyzes the conversion of 4-diphosphocytidyl-2-C-methyl-D-erythritol 2-phosphate (CDP-ME2P) to 2-C-methyl-D-erythritol 2,4-cyclodiphosphate (ME-CPP) with a corresponding release of cytidine 5-monophosphate (CMP) (IspF).</text>
</comment>
<comment type="catalytic activity">
    <reaction evidence="1">
        <text>2-C-methyl-D-erythritol 4-phosphate + CTP + H(+) = 4-CDP-2-C-methyl-D-erythritol + diphosphate</text>
        <dbReference type="Rhea" id="RHEA:13429"/>
        <dbReference type="ChEBI" id="CHEBI:15378"/>
        <dbReference type="ChEBI" id="CHEBI:33019"/>
        <dbReference type="ChEBI" id="CHEBI:37563"/>
        <dbReference type="ChEBI" id="CHEBI:57823"/>
        <dbReference type="ChEBI" id="CHEBI:58262"/>
        <dbReference type="EC" id="2.7.7.60"/>
    </reaction>
</comment>
<comment type="catalytic activity">
    <reaction evidence="1">
        <text>4-CDP-2-C-methyl-D-erythritol 2-phosphate = 2-C-methyl-D-erythritol 2,4-cyclic diphosphate + CMP</text>
        <dbReference type="Rhea" id="RHEA:23864"/>
        <dbReference type="ChEBI" id="CHEBI:57919"/>
        <dbReference type="ChEBI" id="CHEBI:58483"/>
        <dbReference type="ChEBI" id="CHEBI:60377"/>
        <dbReference type="EC" id="4.6.1.12"/>
    </reaction>
</comment>
<comment type="cofactor">
    <cofactor evidence="1">
        <name>a divalent metal cation</name>
        <dbReference type="ChEBI" id="CHEBI:60240"/>
    </cofactor>
</comment>
<comment type="pathway">
    <text evidence="1">Isoprenoid biosynthesis; isopentenyl diphosphate biosynthesis via DXP pathway; isopentenyl diphosphate from 1-deoxy-D-xylulose 5-phosphate: step 2/6.</text>
</comment>
<comment type="pathway">
    <text evidence="1">Isoprenoid biosynthesis; isopentenyl diphosphate biosynthesis via DXP pathway; isopentenyl diphosphate from 1-deoxy-D-xylulose 5-phosphate: step 4/6.</text>
</comment>
<comment type="similarity">
    <text evidence="1">In the N-terminal section; belongs to the IspD/TarI cytidylyltransferase family. IspD subfamily.</text>
</comment>
<comment type="similarity">
    <text evidence="1">In the C-terminal section; belongs to the IspF family.</text>
</comment>
<keyword id="KW-0414">Isoprene biosynthesis</keyword>
<keyword id="KW-0456">Lyase</keyword>
<keyword id="KW-0479">Metal-binding</keyword>
<keyword id="KW-0511">Multifunctional enzyme</keyword>
<keyword id="KW-0548">Nucleotidyltransferase</keyword>
<keyword id="KW-0808">Transferase</keyword>
<feature type="chain" id="PRO_1000068626" description="Bifunctional enzyme IspD/IspF">
    <location>
        <begin position="1"/>
        <end position="371"/>
    </location>
</feature>
<feature type="region of interest" description="2-C-methyl-D-erythritol 4-phosphate cytidylyltransferase" evidence="1">
    <location>
        <begin position="1"/>
        <end position="210"/>
    </location>
</feature>
<feature type="region of interest" description="2-C-methyl-D-erythritol 2,4-cyclodiphosphate synthase" evidence="1">
    <location>
        <begin position="211"/>
        <end position="371"/>
    </location>
</feature>
<feature type="binding site" evidence="1">
    <location>
        <begin position="217"/>
        <end position="219"/>
    </location>
    <ligand>
        <name>4-CDP-2-C-methyl-D-erythritol 2-phosphate</name>
        <dbReference type="ChEBI" id="CHEBI:57919"/>
    </ligand>
</feature>
<feature type="binding site" evidence="1">
    <location>
        <position position="217"/>
    </location>
    <ligand>
        <name>a divalent metal cation</name>
        <dbReference type="ChEBI" id="CHEBI:60240"/>
    </ligand>
</feature>
<feature type="binding site" evidence="1">
    <location>
        <position position="219"/>
    </location>
    <ligand>
        <name>a divalent metal cation</name>
        <dbReference type="ChEBI" id="CHEBI:60240"/>
    </ligand>
</feature>
<feature type="binding site" evidence="1">
    <location>
        <begin position="243"/>
        <end position="244"/>
    </location>
    <ligand>
        <name>4-CDP-2-C-methyl-D-erythritol 2-phosphate</name>
        <dbReference type="ChEBI" id="CHEBI:57919"/>
    </ligand>
</feature>
<feature type="binding site" evidence="1">
    <location>
        <position position="251"/>
    </location>
    <ligand>
        <name>a divalent metal cation</name>
        <dbReference type="ChEBI" id="CHEBI:60240"/>
    </ligand>
</feature>
<feature type="binding site" evidence="1">
    <location>
        <begin position="265"/>
        <end position="267"/>
    </location>
    <ligand>
        <name>4-CDP-2-C-methyl-D-erythritol 2-phosphate</name>
        <dbReference type="ChEBI" id="CHEBI:57919"/>
    </ligand>
</feature>
<feature type="binding site" evidence="1">
    <location>
        <begin position="270"/>
        <end position="274"/>
    </location>
    <ligand>
        <name>4-CDP-2-C-methyl-D-erythritol 2-phosphate</name>
        <dbReference type="ChEBI" id="CHEBI:57919"/>
    </ligand>
</feature>
<feature type="binding site" evidence="1">
    <location>
        <begin position="341"/>
        <end position="344"/>
    </location>
    <ligand>
        <name>4-CDP-2-C-methyl-D-erythritol 2-phosphate</name>
        <dbReference type="ChEBI" id="CHEBI:57919"/>
    </ligand>
</feature>
<feature type="binding site" evidence="1">
    <location>
        <position position="348"/>
    </location>
    <ligand>
        <name>4-CDP-2-C-methyl-D-erythritol 2-phosphate</name>
        <dbReference type="ChEBI" id="CHEBI:57919"/>
    </ligand>
</feature>
<feature type="binding site" evidence="1">
    <location>
        <position position="351"/>
    </location>
    <ligand>
        <name>4-CDP-2-C-methyl-D-erythritol 2-phosphate</name>
        <dbReference type="ChEBI" id="CHEBI:57919"/>
    </ligand>
</feature>
<feature type="site" description="Transition state stabilizer" evidence="1">
    <location>
        <position position="16"/>
    </location>
</feature>
<feature type="site" description="Transition state stabilizer" evidence="1">
    <location>
        <position position="23"/>
    </location>
</feature>
<feature type="site" description="Positions MEP for the nucleophilic attack" evidence="1">
    <location>
        <position position="139"/>
    </location>
</feature>
<feature type="site" description="Positions MEP for the nucleophilic attack" evidence="1">
    <location>
        <position position="191"/>
    </location>
</feature>
<feature type="site" description="Transition state stabilizer" evidence="1">
    <location>
        <position position="243"/>
    </location>
</feature>
<feature type="site" description="Transition state stabilizer" evidence="1">
    <location>
        <position position="342"/>
    </location>
</feature>
<reference key="1">
    <citation type="submission" date="2007-07" db="EMBL/GenBank/DDBJ databases">
        <title>Complete genome sequence of Campylobacter jejuni subsp doylei 269.97 isolated from human blood.</title>
        <authorList>
            <person name="Fouts D.E."/>
            <person name="Mongodin E.F."/>
            <person name="Puiu D."/>
            <person name="Sebastian Y."/>
            <person name="Miller W.G."/>
            <person name="Mandrell R.E."/>
            <person name="Lastovica A.J."/>
            <person name="Nelson K.E."/>
        </authorList>
    </citation>
    <scope>NUCLEOTIDE SEQUENCE [LARGE SCALE GENOMIC DNA]</scope>
    <source>
        <strain>ATCC BAA-1458 / RM4099 / 269.97</strain>
    </source>
</reference>
<sequence length="371" mass="41697">MSEISLIMLAAGNSTRFNTKVKKQFLRLGNDPLWLYATKNLSSFYPFKKIVVTSSNIAYMKKFTKNYEFIEGGDTRAESLKKALELIDSEFVMVSDVARVLVSKNLFDRLIENLDKADCITPALKVADTTLFDNEALQREKIKLIQTPQISKTKLLKKALDQNLEFTDDSTAIAAMGGKIWFVEGEENARKLTFKEDLKKLDLPKPSFEIFTGNGFDVHEFGENRPLLLAGVQIHPTMGLKAHSDGDVLAHSLTDAILGAAVLGDIGELYPDTDMKFKNANSMELLKQAYDKVREVGFELINIDICVMAQSPKLKDFKQAMQSNIAHTLDLDEFRINVKATTTEKLGFIGRKEGMAVLSSVNLKYFDWTRL</sequence>
<organism>
    <name type="scientific">Campylobacter jejuni subsp. doylei (strain ATCC BAA-1458 / RM4099 / 269.97)</name>
    <dbReference type="NCBI Taxonomy" id="360109"/>
    <lineage>
        <taxon>Bacteria</taxon>
        <taxon>Pseudomonadati</taxon>
        <taxon>Campylobacterota</taxon>
        <taxon>Epsilonproteobacteria</taxon>
        <taxon>Campylobacterales</taxon>
        <taxon>Campylobacteraceae</taxon>
        <taxon>Campylobacter</taxon>
    </lineage>
</organism>
<protein>
    <recommendedName>
        <fullName evidence="1">Bifunctional enzyme IspD/IspF</fullName>
    </recommendedName>
    <domain>
        <recommendedName>
            <fullName evidence="1">2-C-methyl-D-erythritol 4-phosphate cytidylyltransferase</fullName>
            <ecNumber evidence="1">2.7.7.60</ecNumber>
        </recommendedName>
        <alternativeName>
            <fullName evidence="1">4-diphosphocytidyl-2C-methyl-D-erythritol synthase</fullName>
        </alternativeName>
        <alternativeName>
            <fullName evidence="1">MEP cytidylyltransferase</fullName>
            <shortName evidence="1">MCT</shortName>
        </alternativeName>
    </domain>
    <domain>
        <recommendedName>
            <fullName evidence="1">2-C-methyl-D-erythritol 2,4-cyclodiphosphate synthase</fullName>
            <shortName evidence="1">MECDP-synthase</shortName>
            <shortName evidence="1">MECPP-synthase</shortName>
            <shortName evidence="1">MECPS</shortName>
            <ecNumber evidence="1">4.6.1.12</ecNumber>
        </recommendedName>
    </domain>
</protein>
<accession>A7H5V8</accession>
<name>ISPDF_CAMJD</name>
<evidence type="ECO:0000255" key="1">
    <source>
        <dbReference type="HAMAP-Rule" id="MF_01520"/>
    </source>
</evidence>
<dbReference type="EC" id="2.7.7.60" evidence="1"/>
<dbReference type="EC" id="4.6.1.12" evidence="1"/>
<dbReference type="EMBL" id="CP000768">
    <property type="protein sequence ID" value="ABS44602.1"/>
    <property type="molecule type" value="Genomic_DNA"/>
</dbReference>
<dbReference type="SMR" id="A7H5V8"/>
<dbReference type="KEGG" id="cjd:JJD26997_1961"/>
<dbReference type="HOGENOM" id="CLU_042800_2_6_7"/>
<dbReference type="UniPathway" id="UPA00056">
    <property type="reaction ID" value="UER00093"/>
</dbReference>
<dbReference type="UniPathway" id="UPA00056">
    <property type="reaction ID" value="UER00095"/>
</dbReference>
<dbReference type="Proteomes" id="UP000002302">
    <property type="component" value="Chromosome"/>
</dbReference>
<dbReference type="GO" id="GO:0008685">
    <property type="term" value="F:2-C-methyl-D-erythritol 2,4-cyclodiphosphate synthase activity"/>
    <property type="evidence" value="ECO:0007669"/>
    <property type="project" value="UniProtKB-UniRule"/>
</dbReference>
<dbReference type="GO" id="GO:0050518">
    <property type="term" value="F:2-C-methyl-D-erythritol 4-phosphate cytidylyltransferase activity"/>
    <property type="evidence" value="ECO:0007669"/>
    <property type="project" value="UniProtKB-UniRule"/>
</dbReference>
<dbReference type="GO" id="GO:0046872">
    <property type="term" value="F:metal ion binding"/>
    <property type="evidence" value="ECO:0007669"/>
    <property type="project" value="UniProtKB-KW"/>
</dbReference>
<dbReference type="GO" id="GO:0019288">
    <property type="term" value="P:isopentenyl diphosphate biosynthetic process, methylerythritol 4-phosphate pathway"/>
    <property type="evidence" value="ECO:0007669"/>
    <property type="project" value="UniProtKB-UniRule"/>
</dbReference>
<dbReference type="GO" id="GO:0016114">
    <property type="term" value="P:terpenoid biosynthetic process"/>
    <property type="evidence" value="ECO:0007669"/>
    <property type="project" value="InterPro"/>
</dbReference>
<dbReference type="CDD" id="cd02516">
    <property type="entry name" value="CDP-ME_synthetase"/>
    <property type="match status" value="1"/>
</dbReference>
<dbReference type="CDD" id="cd00554">
    <property type="entry name" value="MECDP_synthase"/>
    <property type="match status" value="1"/>
</dbReference>
<dbReference type="Gene3D" id="3.30.1330.50">
    <property type="entry name" value="2-C-methyl-D-erythritol 2,4-cyclodiphosphate synthase"/>
    <property type="match status" value="1"/>
</dbReference>
<dbReference type="Gene3D" id="3.90.550.10">
    <property type="entry name" value="Spore Coat Polysaccharide Biosynthesis Protein SpsA, Chain A"/>
    <property type="match status" value="1"/>
</dbReference>
<dbReference type="HAMAP" id="MF_01520">
    <property type="entry name" value="IspDF"/>
    <property type="match status" value="1"/>
</dbReference>
<dbReference type="HAMAP" id="MF_00107">
    <property type="entry name" value="IspF"/>
    <property type="match status" value="1"/>
</dbReference>
<dbReference type="InterPro" id="IPR001228">
    <property type="entry name" value="IspD"/>
</dbReference>
<dbReference type="InterPro" id="IPR026596">
    <property type="entry name" value="IspD/F"/>
</dbReference>
<dbReference type="InterPro" id="IPR034683">
    <property type="entry name" value="IspD/TarI"/>
</dbReference>
<dbReference type="InterPro" id="IPR018294">
    <property type="entry name" value="ISPD_synthase_CS"/>
</dbReference>
<dbReference type="InterPro" id="IPR003526">
    <property type="entry name" value="MECDP_synthase"/>
</dbReference>
<dbReference type="InterPro" id="IPR020555">
    <property type="entry name" value="MECDP_synthase_CS"/>
</dbReference>
<dbReference type="InterPro" id="IPR036571">
    <property type="entry name" value="MECDP_synthase_sf"/>
</dbReference>
<dbReference type="InterPro" id="IPR029044">
    <property type="entry name" value="Nucleotide-diphossugar_trans"/>
</dbReference>
<dbReference type="NCBIfam" id="TIGR00453">
    <property type="entry name" value="ispD"/>
    <property type="match status" value="1"/>
</dbReference>
<dbReference type="NCBIfam" id="TIGR00151">
    <property type="entry name" value="ispF"/>
    <property type="match status" value="1"/>
</dbReference>
<dbReference type="NCBIfam" id="NF006899">
    <property type="entry name" value="PRK09382.1"/>
    <property type="match status" value="1"/>
</dbReference>
<dbReference type="PANTHER" id="PTHR43181">
    <property type="entry name" value="2-C-METHYL-D-ERYTHRITOL 2,4-CYCLODIPHOSPHATE SYNTHASE, CHLOROPLASTIC"/>
    <property type="match status" value="1"/>
</dbReference>
<dbReference type="PANTHER" id="PTHR43181:SF1">
    <property type="entry name" value="2-C-METHYL-D-ERYTHRITOL 2,4-CYCLODIPHOSPHATE SYNTHASE, CHLOROPLASTIC"/>
    <property type="match status" value="1"/>
</dbReference>
<dbReference type="Pfam" id="PF01128">
    <property type="entry name" value="IspD"/>
    <property type="match status" value="1"/>
</dbReference>
<dbReference type="Pfam" id="PF02542">
    <property type="entry name" value="YgbB"/>
    <property type="match status" value="1"/>
</dbReference>
<dbReference type="SUPFAM" id="SSF69765">
    <property type="entry name" value="IpsF-like"/>
    <property type="match status" value="1"/>
</dbReference>
<dbReference type="SUPFAM" id="SSF53448">
    <property type="entry name" value="Nucleotide-diphospho-sugar transferases"/>
    <property type="match status" value="1"/>
</dbReference>
<dbReference type="PROSITE" id="PS01295">
    <property type="entry name" value="ISPD"/>
    <property type="match status" value="1"/>
</dbReference>
<dbReference type="PROSITE" id="PS01350">
    <property type="entry name" value="ISPF"/>
    <property type="match status" value="1"/>
</dbReference>
<proteinExistence type="inferred from homology"/>
<gene>
    <name evidence="1" type="primary">ispDF</name>
    <name type="ordered locus">JJD26997_1961</name>
</gene>